<protein>
    <recommendedName>
        <fullName>Antitoxin Dmd</fullName>
    </recommendedName>
</protein>
<sequence>MELVKVVFMGWFKNESMFTKEITMMKDDVQWATTQYAEVNKALVKAFIDDKKVCEVDCRG</sequence>
<accession>P39232</accession>
<comment type="function">
    <text evidence="2">Antitoxin component of a potential type II toxin-antitoxin (TA) system. Acts as an antitoxin against host toxins RnlA and LsoA, preventing them from degrading T4 bacteriophage-derived mRNA and thus permitting successful virus infection. Stabilizes middle (8-10 minutes) and late (18 to 28 minutes) T4 gene transcripts.</text>
</comment>
<comment type="subunit">
    <text evidence="2 3">Can form a complex with non-cognate host toxins LsoA and RnlA.</text>
</comment>
<comment type="disruption phenotype">
    <text evidence="1 2 4">Phage grows very poorly in wild-type E.coli K12 or in cells expressing plasmid-derived toxin-antitoxin system LsoA-LsoB; if the host has a deletion in rnlA-rnlB no effect is seen. Absence of full-length transcripts of late (18 to 28 minutes) T4 genes, and thus loss of synthesis of late proteins. Partially suppressed by overexpression of host IscR.</text>
</comment>
<comment type="caution">
    <text evidence="5">Enterobacteria phage T4 probably has no corresponding toxin gene.</text>
</comment>
<proteinExistence type="evidence at protein level"/>
<dbReference type="EMBL" id="S57514">
    <property type="protein sequence ID" value="AAB25708.1"/>
    <property type="molecule type" value="Genomic_DNA"/>
</dbReference>
<dbReference type="EMBL" id="AF158101">
    <property type="protein sequence ID" value="AAD42512.1"/>
    <property type="molecule type" value="Genomic_DNA"/>
</dbReference>
<dbReference type="PIR" id="A45681">
    <property type="entry name" value="A45681"/>
</dbReference>
<dbReference type="RefSeq" id="NP_049653.1">
    <property type="nucleotide sequence ID" value="NC_000866.4"/>
</dbReference>
<dbReference type="PDB" id="5HY3">
    <property type="method" value="X-ray"/>
    <property type="resolution" value="3.10 A"/>
    <property type="chains" value="B=1-60"/>
</dbReference>
<dbReference type="PDBsum" id="5HY3"/>
<dbReference type="SMR" id="P39232"/>
<dbReference type="GeneID" id="1258668"/>
<dbReference type="KEGG" id="vg:1258668"/>
<dbReference type="OrthoDB" id="23707at10239"/>
<dbReference type="Proteomes" id="UP000009087">
    <property type="component" value="Segment"/>
</dbReference>
<dbReference type="InterPro" id="IPR035137">
    <property type="entry name" value="Dmd"/>
</dbReference>
<dbReference type="Pfam" id="PF17587">
    <property type="entry name" value="Dmd"/>
    <property type="match status" value="1"/>
</dbReference>
<feature type="chain" id="PRO_0000165095" description="Antitoxin Dmd">
    <location>
        <begin position="1"/>
        <end position="60"/>
    </location>
</feature>
<feature type="strand" evidence="6">
    <location>
        <begin position="4"/>
        <end position="11"/>
    </location>
</feature>
<feature type="strand" evidence="6">
    <location>
        <begin position="17"/>
        <end position="24"/>
    </location>
</feature>
<feature type="helix" evidence="6">
    <location>
        <begin position="26"/>
        <end position="28"/>
    </location>
</feature>
<feature type="helix" evidence="6">
    <location>
        <begin position="29"/>
        <end position="40"/>
    </location>
</feature>
<feature type="strand" evidence="6">
    <location>
        <begin position="43"/>
        <end position="48"/>
    </location>
</feature>
<feature type="strand" evidence="6">
    <location>
        <begin position="51"/>
        <end position="57"/>
    </location>
</feature>
<name>DMD_BPT4</name>
<keyword id="KW-0002">3D-structure</keyword>
<keyword id="KW-1259">Evasion of bacteria-mediated translation shutoff by virus</keyword>
<keyword id="KW-0945">Host-virus interaction</keyword>
<keyword id="KW-1185">Reference proteome</keyword>
<keyword id="KW-1277">Toxin-antitoxin system</keyword>
<evidence type="ECO:0000269" key="1">
    <source>
    </source>
</evidence>
<evidence type="ECO:0000269" key="2">
    <source>
    </source>
</evidence>
<evidence type="ECO:0000269" key="3">
    <source>
    </source>
</evidence>
<evidence type="ECO:0000269" key="4">
    <source>
    </source>
</evidence>
<evidence type="ECO:0000305" key="5"/>
<evidence type="ECO:0007829" key="6">
    <source>
        <dbReference type="PDB" id="5HY3"/>
    </source>
</evidence>
<gene>
    <name type="primary">dmd</name>
    <name type="synonym">61.5</name>
    <name type="synonym">y02B</name>
</gene>
<reference key="1">
    <citation type="journal article" date="1993" name="J. Virol.">
        <title>Analysis of five presumptive protein-coding sequences clustered between the primosome genes, 41 and 61, of bacteriophages T4, T2, and T6.</title>
        <authorList>
            <person name="Selick H.E."/>
            <person name="Stormo G.D."/>
            <person name="Dyson R.L."/>
            <person name="Alberts B.M."/>
        </authorList>
    </citation>
    <scope>NUCLEOTIDE SEQUENCE [GENOMIC DNA]</scope>
</reference>
<reference key="2">
    <citation type="journal article" date="2003" name="Microbiol. Mol. Biol. Rev.">
        <title>Bacteriophage T4 genome.</title>
        <authorList>
            <person name="Miller E.S."/>
            <person name="Kutter E."/>
            <person name="Mosig G."/>
            <person name="Arisaka F."/>
            <person name="Kunisawa T."/>
            <person name="Ruger W."/>
        </authorList>
    </citation>
    <scope>NUCLEOTIDE SEQUENCE [LARGE SCALE GENOMIC DNA]</scope>
</reference>
<reference key="3">
    <citation type="journal article" date="1996" name="Genetics">
        <title>Destabilization of bacteriophage T4 mRNAs by a mutation of gene 61.5.</title>
        <authorList>
            <person name="Kai T."/>
            <person name="Selick H.E."/>
            <person name="Yonesaki T."/>
        </authorList>
    </citation>
    <scope>DISRUPTION PHENOTYPE</scope>
</reference>
<reference key="4">
    <citation type="journal article" date="2010" name="Genetics">
        <title>IscR regulates RNase LS activity by repressing rnlA transcription.</title>
        <authorList>
            <person name="Otsuka Y."/>
            <person name="Miki K."/>
            <person name="Koga M."/>
            <person name="Katayama N."/>
            <person name="Morimoto W."/>
            <person name="Takahashi Y."/>
            <person name="Yonesaki T."/>
        </authorList>
    </citation>
    <scope>DISRUPTION PHENOTYPE</scope>
</reference>
<reference key="5">
    <citation type="journal article" date="2012" name="Mol. Microbiol.">
        <title>Dmd of bacteriophage T4 functions as an antitoxin against Escherichia coli LsoA and RnlA toxins.</title>
        <authorList>
            <person name="Otsuka Y."/>
            <person name="Yonesaki T."/>
        </authorList>
    </citation>
    <scope>FUNCTION AS AN ANTITOXIN</scope>
    <scope>INTERACTION WITH HOST TOXINS LSOB AND RNLA</scope>
    <scope>DISRUPTION PHENOTYPE</scope>
</reference>
<reference key="6">
    <citation type="journal article" date="2013" name="Mol. Microbiol.">
        <title>Structure-function studies of Escherichia coli RnlA reveal a novel toxin structure involved in bacteriophage resistance.</title>
        <authorList>
            <person name="Wei Y."/>
            <person name="Gao Z.Q."/>
            <person name="Otsuka Y."/>
            <person name="Naka K."/>
            <person name="Yonesaki T."/>
            <person name="Zhang H."/>
            <person name="Dong Y.H."/>
        </authorList>
    </citation>
    <scope>SUBUNIT</scope>
</reference>
<organismHost>
    <name type="scientific">Escherichia coli</name>
    <dbReference type="NCBI Taxonomy" id="562"/>
</organismHost>
<organism>
    <name type="scientific">Enterobacteria phage T4</name>
    <name type="common">Bacteriophage T4</name>
    <dbReference type="NCBI Taxonomy" id="10665"/>
    <lineage>
        <taxon>Viruses</taxon>
        <taxon>Duplodnaviria</taxon>
        <taxon>Heunggongvirae</taxon>
        <taxon>Uroviricota</taxon>
        <taxon>Caudoviricetes</taxon>
        <taxon>Straboviridae</taxon>
        <taxon>Tevenvirinae</taxon>
        <taxon>Tequatrovirus</taxon>
    </lineage>
</organism>